<name>PLSX_YERPB</name>
<organism>
    <name type="scientific">Yersinia pseudotuberculosis serotype IB (strain PB1/+)</name>
    <dbReference type="NCBI Taxonomy" id="502801"/>
    <lineage>
        <taxon>Bacteria</taxon>
        <taxon>Pseudomonadati</taxon>
        <taxon>Pseudomonadota</taxon>
        <taxon>Gammaproteobacteria</taxon>
        <taxon>Enterobacterales</taxon>
        <taxon>Yersiniaceae</taxon>
        <taxon>Yersinia</taxon>
    </lineage>
</organism>
<sequence length="344" mass="36636">MACLTLALDAMGGDFGPCVTVPASLQALASNPQLKLLLVGNPDTITPLLANADSLLLERLQVIPAEHVIASDAKPSQAIRASRGTSMRVALELVKNGEAAACVSAGNTGALMGLAKMMIKPLEGIARPALMTVIPNQRRSKTVVLDLGANVECDSTMLVQFAVMGSVMAEEVVGIVEPRVALLNIGEEENKGLDNIREAAAVLKNTPAINYIGYLEGNDLLTGKTDVMVCDGFVGNVTLKTMEGVIRMFLSLLKPSGEGSKQSWWLKLIGRWLQKRVAKRFGHLNPDQYNGACLLGLRGIVIKSHGAANQRAFAVAIEQAVQAVQRQVPERIAARLEAVLPKSD</sequence>
<reference key="1">
    <citation type="submission" date="2008-04" db="EMBL/GenBank/DDBJ databases">
        <title>Complete sequence of Yersinia pseudotuberculosis PB1/+.</title>
        <authorList>
            <person name="Copeland A."/>
            <person name="Lucas S."/>
            <person name="Lapidus A."/>
            <person name="Glavina del Rio T."/>
            <person name="Dalin E."/>
            <person name="Tice H."/>
            <person name="Bruce D."/>
            <person name="Goodwin L."/>
            <person name="Pitluck S."/>
            <person name="Munk A.C."/>
            <person name="Brettin T."/>
            <person name="Detter J.C."/>
            <person name="Han C."/>
            <person name="Tapia R."/>
            <person name="Schmutz J."/>
            <person name="Larimer F."/>
            <person name="Land M."/>
            <person name="Hauser L."/>
            <person name="Challacombe J.F."/>
            <person name="Green L."/>
            <person name="Lindler L.E."/>
            <person name="Nikolich M.P."/>
            <person name="Richardson P."/>
        </authorList>
    </citation>
    <scope>NUCLEOTIDE SEQUENCE [LARGE SCALE GENOMIC DNA]</scope>
    <source>
        <strain>PB1/+</strain>
    </source>
</reference>
<evidence type="ECO:0000255" key="1">
    <source>
        <dbReference type="HAMAP-Rule" id="MF_00019"/>
    </source>
</evidence>
<keyword id="KW-0963">Cytoplasm</keyword>
<keyword id="KW-0444">Lipid biosynthesis</keyword>
<keyword id="KW-0443">Lipid metabolism</keyword>
<keyword id="KW-0594">Phospholipid biosynthesis</keyword>
<keyword id="KW-1208">Phospholipid metabolism</keyword>
<keyword id="KW-0808">Transferase</keyword>
<accession>B2K759</accession>
<comment type="function">
    <text evidence="1">Catalyzes the reversible formation of acyl-phosphate (acyl-PO(4)) from acyl-[acyl-carrier-protein] (acyl-ACP). This enzyme utilizes acyl-ACP as fatty acyl donor, but not acyl-CoA.</text>
</comment>
<comment type="catalytic activity">
    <reaction evidence="1">
        <text>a fatty acyl-[ACP] + phosphate = an acyl phosphate + holo-[ACP]</text>
        <dbReference type="Rhea" id="RHEA:42292"/>
        <dbReference type="Rhea" id="RHEA-COMP:9685"/>
        <dbReference type="Rhea" id="RHEA-COMP:14125"/>
        <dbReference type="ChEBI" id="CHEBI:43474"/>
        <dbReference type="ChEBI" id="CHEBI:59918"/>
        <dbReference type="ChEBI" id="CHEBI:64479"/>
        <dbReference type="ChEBI" id="CHEBI:138651"/>
        <dbReference type="EC" id="2.3.1.274"/>
    </reaction>
</comment>
<comment type="pathway">
    <text evidence="1">Lipid metabolism; phospholipid metabolism.</text>
</comment>
<comment type="subunit">
    <text evidence="1">Homodimer. Probably interacts with PlsY.</text>
</comment>
<comment type="subcellular location">
    <subcellularLocation>
        <location evidence="1">Cytoplasm</location>
    </subcellularLocation>
    <text evidence="1">Associated with the membrane possibly through PlsY.</text>
</comment>
<comment type="similarity">
    <text evidence="1">Belongs to the PlsX family.</text>
</comment>
<feature type="chain" id="PRO_1000089952" description="Phosphate acyltransferase">
    <location>
        <begin position="1"/>
        <end position="344"/>
    </location>
</feature>
<protein>
    <recommendedName>
        <fullName evidence="1">Phosphate acyltransferase</fullName>
        <ecNumber evidence="1">2.3.1.274</ecNumber>
    </recommendedName>
    <alternativeName>
        <fullName evidence="1">Acyl-ACP phosphotransacylase</fullName>
    </alternativeName>
    <alternativeName>
        <fullName evidence="1">Acyl-[acyl-carrier-protein]--phosphate acyltransferase</fullName>
    </alternativeName>
    <alternativeName>
        <fullName evidence="1">Phosphate-acyl-ACP acyltransferase</fullName>
    </alternativeName>
</protein>
<proteinExistence type="inferred from homology"/>
<gene>
    <name evidence="1" type="primary">plsX</name>
    <name type="ordered locus">YPTS_2562</name>
</gene>
<dbReference type="EC" id="2.3.1.274" evidence="1"/>
<dbReference type="EMBL" id="CP001048">
    <property type="protein sequence ID" value="ACC89522.1"/>
    <property type="molecule type" value="Genomic_DNA"/>
</dbReference>
<dbReference type="RefSeq" id="WP_002210932.1">
    <property type="nucleotide sequence ID" value="NZ_CP009780.1"/>
</dbReference>
<dbReference type="SMR" id="B2K759"/>
<dbReference type="GeneID" id="57976975"/>
<dbReference type="KEGG" id="ypb:YPTS_2562"/>
<dbReference type="UniPathway" id="UPA00085"/>
<dbReference type="GO" id="GO:0005737">
    <property type="term" value="C:cytoplasm"/>
    <property type="evidence" value="ECO:0007669"/>
    <property type="project" value="UniProtKB-SubCell"/>
</dbReference>
<dbReference type="GO" id="GO:0043811">
    <property type="term" value="F:phosphate:acyl-[acyl carrier protein] acyltransferase activity"/>
    <property type="evidence" value="ECO:0007669"/>
    <property type="project" value="UniProtKB-UniRule"/>
</dbReference>
<dbReference type="GO" id="GO:0006633">
    <property type="term" value="P:fatty acid biosynthetic process"/>
    <property type="evidence" value="ECO:0007669"/>
    <property type="project" value="UniProtKB-UniRule"/>
</dbReference>
<dbReference type="GO" id="GO:0008654">
    <property type="term" value="P:phospholipid biosynthetic process"/>
    <property type="evidence" value="ECO:0007669"/>
    <property type="project" value="UniProtKB-KW"/>
</dbReference>
<dbReference type="FunFam" id="3.40.718.10:FF:000008">
    <property type="entry name" value="Phosphate acyltransferase"/>
    <property type="match status" value="1"/>
</dbReference>
<dbReference type="Gene3D" id="3.40.718.10">
    <property type="entry name" value="Isopropylmalate Dehydrogenase"/>
    <property type="match status" value="1"/>
</dbReference>
<dbReference type="HAMAP" id="MF_00019">
    <property type="entry name" value="PlsX"/>
    <property type="match status" value="1"/>
</dbReference>
<dbReference type="InterPro" id="IPR003664">
    <property type="entry name" value="FA_synthesis"/>
</dbReference>
<dbReference type="InterPro" id="IPR012281">
    <property type="entry name" value="Phospholipid_synth_PlsX-like"/>
</dbReference>
<dbReference type="NCBIfam" id="TIGR00182">
    <property type="entry name" value="plsX"/>
    <property type="match status" value="1"/>
</dbReference>
<dbReference type="PANTHER" id="PTHR30100">
    <property type="entry name" value="FATTY ACID/PHOSPHOLIPID SYNTHESIS PROTEIN PLSX"/>
    <property type="match status" value="1"/>
</dbReference>
<dbReference type="PANTHER" id="PTHR30100:SF1">
    <property type="entry name" value="PHOSPHATE ACYLTRANSFERASE"/>
    <property type="match status" value="1"/>
</dbReference>
<dbReference type="Pfam" id="PF02504">
    <property type="entry name" value="FA_synthesis"/>
    <property type="match status" value="1"/>
</dbReference>
<dbReference type="PIRSF" id="PIRSF002465">
    <property type="entry name" value="Phsphlp_syn_PlsX"/>
    <property type="match status" value="1"/>
</dbReference>
<dbReference type="SUPFAM" id="SSF53659">
    <property type="entry name" value="Isocitrate/Isopropylmalate dehydrogenase-like"/>
    <property type="match status" value="1"/>
</dbReference>